<evidence type="ECO:0000255" key="1">
    <source>
        <dbReference type="HAMAP-Rule" id="MF_00163"/>
    </source>
</evidence>
<dbReference type="EC" id="3.5.1.88" evidence="1"/>
<dbReference type="EMBL" id="AP009510">
    <property type="protein sequence ID" value="BAG13492.1"/>
    <property type="molecule type" value="Genomic_DNA"/>
</dbReference>
<dbReference type="RefSeq" id="WP_015423021.1">
    <property type="nucleotide sequence ID" value="NC_020419.1"/>
</dbReference>
<dbReference type="SMR" id="B1GZ10"/>
<dbReference type="STRING" id="471821.TGRD_009"/>
<dbReference type="KEGG" id="eti:RSTT_007"/>
<dbReference type="KEGG" id="rsd:TGRD_009"/>
<dbReference type="PATRIC" id="fig|471821.5.peg.19"/>
<dbReference type="HOGENOM" id="CLU_061901_2_1_0"/>
<dbReference type="OrthoDB" id="9804313at2"/>
<dbReference type="Proteomes" id="UP000001691">
    <property type="component" value="Chromosome"/>
</dbReference>
<dbReference type="GO" id="GO:0046872">
    <property type="term" value="F:metal ion binding"/>
    <property type="evidence" value="ECO:0007669"/>
    <property type="project" value="UniProtKB-KW"/>
</dbReference>
<dbReference type="GO" id="GO:0042586">
    <property type="term" value="F:peptide deformylase activity"/>
    <property type="evidence" value="ECO:0007669"/>
    <property type="project" value="UniProtKB-UniRule"/>
</dbReference>
<dbReference type="GO" id="GO:0043686">
    <property type="term" value="P:co-translational protein modification"/>
    <property type="evidence" value="ECO:0007669"/>
    <property type="project" value="TreeGrafter"/>
</dbReference>
<dbReference type="GO" id="GO:0006412">
    <property type="term" value="P:translation"/>
    <property type="evidence" value="ECO:0007669"/>
    <property type="project" value="UniProtKB-UniRule"/>
</dbReference>
<dbReference type="CDD" id="cd00487">
    <property type="entry name" value="Pep_deformylase"/>
    <property type="match status" value="1"/>
</dbReference>
<dbReference type="Gene3D" id="3.90.45.10">
    <property type="entry name" value="Peptide deformylase"/>
    <property type="match status" value="1"/>
</dbReference>
<dbReference type="HAMAP" id="MF_00163">
    <property type="entry name" value="Pep_deformylase"/>
    <property type="match status" value="1"/>
</dbReference>
<dbReference type="InterPro" id="IPR023635">
    <property type="entry name" value="Peptide_deformylase"/>
</dbReference>
<dbReference type="InterPro" id="IPR036821">
    <property type="entry name" value="Peptide_deformylase_sf"/>
</dbReference>
<dbReference type="NCBIfam" id="TIGR00079">
    <property type="entry name" value="pept_deformyl"/>
    <property type="match status" value="1"/>
</dbReference>
<dbReference type="NCBIfam" id="NF001159">
    <property type="entry name" value="PRK00150.1-3"/>
    <property type="match status" value="1"/>
</dbReference>
<dbReference type="PANTHER" id="PTHR10458">
    <property type="entry name" value="PEPTIDE DEFORMYLASE"/>
    <property type="match status" value="1"/>
</dbReference>
<dbReference type="PANTHER" id="PTHR10458:SF22">
    <property type="entry name" value="PEPTIDE DEFORMYLASE"/>
    <property type="match status" value="1"/>
</dbReference>
<dbReference type="Pfam" id="PF01327">
    <property type="entry name" value="Pep_deformylase"/>
    <property type="match status" value="1"/>
</dbReference>
<dbReference type="PIRSF" id="PIRSF004749">
    <property type="entry name" value="Pep_def"/>
    <property type="match status" value="1"/>
</dbReference>
<dbReference type="PRINTS" id="PR01576">
    <property type="entry name" value="PDEFORMYLASE"/>
</dbReference>
<dbReference type="SUPFAM" id="SSF56420">
    <property type="entry name" value="Peptide deformylase"/>
    <property type="match status" value="1"/>
</dbReference>
<protein>
    <recommendedName>
        <fullName evidence="1">Peptide deformylase</fullName>
        <shortName evidence="1">PDF</shortName>
        <ecNumber evidence="1">3.5.1.88</ecNumber>
    </recommendedName>
    <alternativeName>
        <fullName evidence="1">Polypeptide deformylase</fullName>
    </alternativeName>
</protein>
<name>DEF_ENDTX</name>
<reference key="1">
    <citation type="journal article" date="2008" name="Proc. Natl. Acad. Sci. U.S.A.">
        <title>Complete genome of the uncultured termite group 1 bacteria in a single host protist cell.</title>
        <authorList>
            <person name="Hongoh Y."/>
            <person name="Sharma V.K."/>
            <person name="Prakash T."/>
            <person name="Noda S."/>
            <person name="Taylor T.D."/>
            <person name="Kudo T."/>
            <person name="Sakaki Y."/>
            <person name="Toyoda A."/>
            <person name="Hattori M."/>
            <person name="Ohkuma M."/>
        </authorList>
    </citation>
    <scope>NUCLEOTIDE SEQUENCE [LARGE SCALE GENOMIC DNA]</scope>
</reference>
<proteinExistence type="inferred from homology"/>
<gene>
    <name evidence="1" type="primary">def</name>
    <name type="ordered locus">TGRD_009</name>
</gene>
<sequence>MAKLKIKKYGDPALRKRAEAVSEINEIIKELASDMLETMYSASGVGLAAPQVGILLRFCVIDVDPNKKSPIVMINPEIISGENKITAEEGCLSFPGFYGNVNRFENIIAGYTDLNGNRQEIKAQNFLAKALQHEIDHLDAKLFIDYLPDWKRESIEKKIKRKKKAGDW</sequence>
<comment type="function">
    <text evidence="1">Removes the formyl group from the N-terminal Met of newly synthesized proteins. Requires at least a dipeptide for an efficient rate of reaction. N-terminal L-methionine is a prerequisite for activity but the enzyme has broad specificity at other positions.</text>
</comment>
<comment type="catalytic activity">
    <reaction evidence="1">
        <text>N-terminal N-formyl-L-methionyl-[peptide] + H2O = N-terminal L-methionyl-[peptide] + formate</text>
        <dbReference type="Rhea" id="RHEA:24420"/>
        <dbReference type="Rhea" id="RHEA-COMP:10639"/>
        <dbReference type="Rhea" id="RHEA-COMP:10640"/>
        <dbReference type="ChEBI" id="CHEBI:15377"/>
        <dbReference type="ChEBI" id="CHEBI:15740"/>
        <dbReference type="ChEBI" id="CHEBI:49298"/>
        <dbReference type="ChEBI" id="CHEBI:64731"/>
        <dbReference type="EC" id="3.5.1.88"/>
    </reaction>
</comment>
<comment type="cofactor">
    <cofactor evidence="1">
        <name>Fe(2+)</name>
        <dbReference type="ChEBI" id="CHEBI:29033"/>
    </cofactor>
    <text evidence="1">Binds 1 Fe(2+) ion.</text>
</comment>
<comment type="similarity">
    <text evidence="1">Belongs to the polypeptide deformylase family.</text>
</comment>
<feature type="chain" id="PRO_1000097358" description="Peptide deformylase">
    <location>
        <begin position="1"/>
        <end position="168"/>
    </location>
</feature>
<feature type="active site" evidence="1">
    <location>
        <position position="134"/>
    </location>
</feature>
<feature type="binding site" evidence="1">
    <location>
        <position position="91"/>
    </location>
    <ligand>
        <name>Fe cation</name>
        <dbReference type="ChEBI" id="CHEBI:24875"/>
    </ligand>
</feature>
<feature type="binding site" evidence="1">
    <location>
        <position position="133"/>
    </location>
    <ligand>
        <name>Fe cation</name>
        <dbReference type="ChEBI" id="CHEBI:24875"/>
    </ligand>
</feature>
<feature type="binding site" evidence="1">
    <location>
        <position position="137"/>
    </location>
    <ligand>
        <name>Fe cation</name>
        <dbReference type="ChEBI" id="CHEBI:24875"/>
    </ligand>
</feature>
<accession>B1GZ10</accession>
<keyword id="KW-0378">Hydrolase</keyword>
<keyword id="KW-0408">Iron</keyword>
<keyword id="KW-0479">Metal-binding</keyword>
<keyword id="KW-0648">Protein biosynthesis</keyword>
<organism>
    <name type="scientific">Endomicrobium trichonymphae</name>
    <dbReference type="NCBI Taxonomy" id="1408204"/>
    <lineage>
        <taxon>Bacteria</taxon>
        <taxon>Pseudomonadati</taxon>
        <taxon>Elusimicrobiota</taxon>
        <taxon>Endomicrobiia</taxon>
        <taxon>Endomicrobiales</taxon>
        <taxon>Endomicrobiaceae</taxon>
        <taxon>Candidatus Endomicrobiellum</taxon>
    </lineage>
</organism>